<feature type="chain" id="PRO_1000165310" description="Small ribosomal subunit protein uS8">
    <location>
        <begin position="1"/>
        <end position="132"/>
    </location>
</feature>
<comment type="function">
    <text evidence="1">One of the primary rRNA binding proteins, it binds directly to 16S rRNA central domain where it helps coordinate assembly of the platform of the 30S subunit.</text>
</comment>
<comment type="subunit">
    <text evidence="1">Part of the 30S ribosomal subunit. Contacts proteins S5 and S12.</text>
</comment>
<comment type="similarity">
    <text evidence="1">Belongs to the universal ribosomal protein uS8 family.</text>
</comment>
<keyword id="KW-1185">Reference proteome</keyword>
<keyword id="KW-0687">Ribonucleoprotein</keyword>
<keyword id="KW-0689">Ribosomal protein</keyword>
<keyword id="KW-0694">RNA-binding</keyword>
<keyword id="KW-0699">rRNA-binding</keyword>
<gene>
    <name evidence="1" type="primary">rpsH</name>
    <name type="ordered locus">BT0492</name>
</gene>
<sequence length="132" mass="14762">MAVTHSVGDMLTKIRNASRVKHESVDLKMSKINKSILDILKEEGYIKNYNIFDKKGISFIKAILNYDNKRNPAINRIDAISTPGRKVYSSYKNMPRIKNGYGILIVSSSKGVITGKQAKDNKVGGELICSVW</sequence>
<reference key="1">
    <citation type="submission" date="2004-12" db="EMBL/GenBank/DDBJ databases">
        <title>The genome sequence of Borrelia hermsii and Borrelia turicatae: comparative analysis of two agents of endemic N. America relapsing fever.</title>
        <authorList>
            <person name="Porcella S.F."/>
            <person name="Raffel S.J."/>
            <person name="Schrumpf M.E."/>
            <person name="Montgomery B."/>
            <person name="Smith T."/>
            <person name="Schwan T.G."/>
        </authorList>
    </citation>
    <scope>NUCLEOTIDE SEQUENCE [LARGE SCALE GENOMIC DNA]</scope>
    <source>
        <strain>91E135</strain>
    </source>
</reference>
<name>RS8_BORT9</name>
<organism>
    <name type="scientific">Borrelia turicatae (strain 91E135)</name>
    <dbReference type="NCBI Taxonomy" id="314724"/>
    <lineage>
        <taxon>Bacteria</taxon>
        <taxon>Pseudomonadati</taxon>
        <taxon>Spirochaetota</taxon>
        <taxon>Spirochaetia</taxon>
        <taxon>Spirochaetales</taxon>
        <taxon>Borreliaceae</taxon>
        <taxon>Borrelia</taxon>
    </lineage>
</organism>
<accession>A1QZS8</accession>
<dbReference type="EMBL" id="CP000049">
    <property type="protein sequence ID" value="AAX17820.1"/>
    <property type="molecule type" value="Genomic_DNA"/>
</dbReference>
<dbReference type="RefSeq" id="WP_011772439.1">
    <property type="nucleotide sequence ID" value="NZ_CP073176.1"/>
</dbReference>
<dbReference type="SMR" id="A1QZS8"/>
<dbReference type="KEGG" id="btu:BT0492"/>
<dbReference type="eggNOG" id="COG0096">
    <property type="taxonomic scope" value="Bacteria"/>
</dbReference>
<dbReference type="HOGENOM" id="CLU_098428_0_2_12"/>
<dbReference type="Proteomes" id="UP000001205">
    <property type="component" value="Chromosome"/>
</dbReference>
<dbReference type="GO" id="GO:1990904">
    <property type="term" value="C:ribonucleoprotein complex"/>
    <property type="evidence" value="ECO:0007669"/>
    <property type="project" value="UniProtKB-KW"/>
</dbReference>
<dbReference type="GO" id="GO:0005840">
    <property type="term" value="C:ribosome"/>
    <property type="evidence" value="ECO:0007669"/>
    <property type="project" value="UniProtKB-KW"/>
</dbReference>
<dbReference type="GO" id="GO:0019843">
    <property type="term" value="F:rRNA binding"/>
    <property type="evidence" value="ECO:0007669"/>
    <property type="project" value="UniProtKB-UniRule"/>
</dbReference>
<dbReference type="GO" id="GO:0003735">
    <property type="term" value="F:structural constituent of ribosome"/>
    <property type="evidence" value="ECO:0007669"/>
    <property type="project" value="InterPro"/>
</dbReference>
<dbReference type="GO" id="GO:0006412">
    <property type="term" value="P:translation"/>
    <property type="evidence" value="ECO:0007669"/>
    <property type="project" value="UniProtKB-UniRule"/>
</dbReference>
<dbReference type="FunFam" id="3.30.1370.30:FF:000002">
    <property type="entry name" value="30S ribosomal protein S8"/>
    <property type="match status" value="1"/>
</dbReference>
<dbReference type="FunFam" id="3.30.1490.10:FF:000001">
    <property type="entry name" value="30S ribosomal protein S8"/>
    <property type="match status" value="1"/>
</dbReference>
<dbReference type="Gene3D" id="3.30.1370.30">
    <property type="match status" value="1"/>
</dbReference>
<dbReference type="Gene3D" id="3.30.1490.10">
    <property type="match status" value="1"/>
</dbReference>
<dbReference type="HAMAP" id="MF_01302_B">
    <property type="entry name" value="Ribosomal_uS8_B"/>
    <property type="match status" value="1"/>
</dbReference>
<dbReference type="InterPro" id="IPR000630">
    <property type="entry name" value="Ribosomal_uS8"/>
</dbReference>
<dbReference type="InterPro" id="IPR047863">
    <property type="entry name" value="Ribosomal_uS8_CS"/>
</dbReference>
<dbReference type="InterPro" id="IPR035987">
    <property type="entry name" value="Ribosomal_uS8_sf"/>
</dbReference>
<dbReference type="NCBIfam" id="NF001109">
    <property type="entry name" value="PRK00136.1"/>
    <property type="match status" value="1"/>
</dbReference>
<dbReference type="PANTHER" id="PTHR11758">
    <property type="entry name" value="40S RIBOSOMAL PROTEIN S15A"/>
    <property type="match status" value="1"/>
</dbReference>
<dbReference type="Pfam" id="PF00410">
    <property type="entry name" value="Ribosomal_S8"/>
    <property type="match status" value="1"/>
</dbReference>
<dbReference type="SUPFAM" id="SSF56047">
    <property type="entry name" value="Ribosomal protein S8"/>
    <property type="match status" value="1"/>
</dbReference>
<dbReference type="PROSITE" id="PS00053">
    <property type="entry name" value="RIBOSOMAL_S8"/>
    <property type="match status" value="1"/>
</dbReference>
<protein>
    <recommendedName>
        <fullName evidence="1">Small ribosomal subunit protein uS8</fullName>
    </recommendedName>
    <alternativeName>
        <fullName evidence="2">30S ribosomal protein S8</fullName>
    </alternativeName>
</protein>
<evidence type="ECO:0000255" key="1">
    <source>
        <dbReference type="HAMAP-Rule" id="MF_01302"/>
    </source>
</evidence>
<evidence type="ECO:0000305" key="2"/>
<proteinExistence type="inferred from homology"/>